<keyword id="KW-0687">Ribonucleoprotein</keyword>
<keyword id="KW-0689">Ribosomal protein</keyword>
<keyword id="KW-0694">RNA-binding</keyword>
<keyword id="KW-0699">rRNA-binding</keyword>
<sequence length="149" mass="16639">MRVILQKDVINLGDAGDLREVADGYARNFLFPKRLAVRANEGNTKAAFHQKKLGELKKEKRKKAMEAVATNLNGKEYDILVKTGGGEKLFGAVTPIDVASILKKNGFELDKRKIEIAEPIRNLGSYKIKIRLAEGIQPVITLHVKKEEE</sequence>
<reference key="1">
    <citation type="journal article" date="2006" name="Proc. Natl. Acad. Sci. U.S.A.">
        <title>Genome reduction in Leptospira borgpetersenii reflects limited transmission potential.</title>
        <authorList>
            <person name="Bulach D.M."/>
            <person name="Zuerner R.L."/>
            <person name="Wilson P."/>
            <person name="Seemann T."/>
            <person name="McGrath A."/>
            <person name="Cullen P.A."/>
            <person name="Davis J."/>
            <person name="Johnson M."/>
            <person name="Kuczek E."/>
            <person name="Alt D.P."/>
            <person name="Peterson-Burch B."/>
            <person name="Coppel R.L."/>
            <person name="Rood J.I."/>
            <person name="Davies J.K."/>
            <person name="Adler B."/>
        </authorList>
    </citation>
    <scope>NUCLEOTIDE SEQUENCE [LARGE SCALE GENOMIC DNA]</scope>
    <source>
        <strain>JB197</strain>
    </source>
</reference>
<proteinExistence type="inferred from homology"/>
<dbReference type="EMBL" id="CP000350">
    <property type="protein sequence ID" value="ABJ75800.1"/>
    <property type="molecule type" value="Genomic_DNA"/>
</dbReference>
<dbReference type="RefSeq" id="WP_011669981.1">
    <property type="nucleotide sequence ID" value="NC_008510.1"/>
</dbReference>
<dbReference type="SMR" id="Q04TH0"/>
<dbReference type="KEGG" id="lbj:LBJ_1196"/>
<dbReference type="HOGENOM" id="CLU_078938_3_0_12"/>
<dbReference type="Proteomes" id="UP000000656">
    <property type="component" value="Chromosome 1"/>
</dbReference>
<dbReference type="GO" id="GO:1990904">
    <property type="term" value="C:ribonucleoprotein complex"/>
    <property type="evidence" value="ECO:0007669"/>
    <property type="project" value="UniProtKB-KW"/>
</dbReference>
<dbReference type="GO" id="GO:0005840">
    <property type="term" value="C:ribosome"/>
    <property type="evidence" value="ECO:0007669"/>
    <property type="project" value="UniProtKB-KW"/>
</dbReference>
<dbReference type="GO" id="GO:0019843">
    <property type="term" value="F:rRNA binding"/>
    <property type="evidence" value="ECO:0007669"/>
    <property type="project" value="UniProtKB-UniRule"/>
</dbReference>
<dbReference type="GO" id="GO:0003735">
    <property type="term" value="F:structural constituent of ribosome"/>
    <property type="evidence" value="ECO:0007669"/>
    <property type="project" value="InterPro"/>
</dbReference>
<dbReference type="GO" id="GO:0006412">
    <property type="term" value="P:translation"/>
    <property type="evidence" value="ECO:0007669"/>
    <property type="project" value="UniProtKB-UniRule"/>
</dbReference>
<dbReference type="FunFam" id="3.40.5.10:FF:000008">
    <property type="entry name" value="50S ribosomal protein L9"/>
    <property type="match status" value="1"/>
</dbReference>
<dbReference type="Gene3D" id="3.10.430.100">
    <property type="entry name" value="Ribosomal protein L9, C-terminal domain"/>
    <property type="match status" value="1"/>
</dbReference>
<dbReference type="Gene3D" id="3.40.5.10">
    <property type="entry name" value="Ribosomal protein L9, N-terminal domain"/>
    <property type="match status" value="1"/>
</dbReference>
<dbReference type="HAMAP" id="MF_00503">
    <property type="entry name" value="Ribosomal_bL9"/>
    <property type="match status" value="1"/>
</dbReference>
<dbReference type="InterPro" id="IPR000244">
    <property type="entry name" value="Ribosomal_bL9"/>
</dbReference>
<dbReference type="InterPro" id="IPR009027">
    <property type="entry name" value="Ribosomal_bL9/RNase_H1_N"/>
</dbReference>
<dbReference type="InterPro" id="IPR020594">
    <property type="entry name" value="Ribosomal_bL9_bac/chp"/>
</dbReference>
<dbReference type="InterPro" id="IPR020069">
    <property type="entry name" value="Ribosomal_bL9_C"/>
</dbReference>
<dbReference type="InterPro" id="IPR036791">
    <property type="entry name" value="Ribosomal_bL9_C_sf"/>
</dbReference>
<dbReference type="InterPro" id="IPR020070">
    <property type="entry name" value="Ribosomal_bL9_N"/>
</dbReference>
<dbReference type="InterPro" id="IPR036935">
    <property type="entry name" value="Ribosomal_bL9_N_sf"/>
</dbReference>
<dbReference type="NCBIfam" id="TIGR00158">
    <property type="entry name" value="L9"/>
    <property type="match status" value="1"/>
</dbReference>
<dbReference type="PANTHER" id="PTHR21368">
    <property type="entry name" value="50S RIBOSOMAL PROTEIN L9"/>
    <property type="match status" value="1"/>
</dbReference>
<dbReference type="Pfam" id="PF03948">
    <property type="entry name" value="Ribosomal_L9_C"/>
    <property type="match status" value="1"/>
</dbReference>
<dbReference type="Pfam" id="PF01281">
    <property type="entry name" value="Ribosomal_L9_N"/>
    <property type="match status" value="1"/>
</dbReference>
<dbReference type="SUPFAM" id="SSF55658">
    <property type="entry name" value="L9 N-domain-like"/>
    <property type="match status" value="1"/>
</dbReference>
<dbReference type="SUPFAM" id="SSF55653">
    <property type="entry name" value="Ribosomal protein L9 C-domain"/>
    <property type="match status" value="1"/>
</dbReference>
<dbReference type="PROSITE" id="PS00651">
    <property type="entry name" value="RIBOSOMAL_L9"/>
    <property type="match status" value="1"/>
</dbReference>
<comment type="function">
    <text evidence="1">Binds to the 23S rRNA.</text>
</comment>
<comment type="similarity">
    <text evidence="1">Belongs to the bacterial ribosomal protein bL9 family.</text>
</comment>
<protein>
    <recommendedName>
        <fullName evidence="1">Large ribosomal subunit protein bL9</fullName>
    </recommendedName>
    <alternativeName>
        <fullName evidence="2">50S ribosomal protein L9</fullName>
    </alternativeName>
</protein>
<gene>
    <name evidence="1" type="primary">rplI</name>
    <name type="ordered locus">LBJ_1196</name>
</gene>
<accession>Q04TH0</accession>
<feature type="chain" id="PRO_1000014801" description="Large ribosomal subunit protein bL9">
    <location>
        <begin position="1"/>
        <end position="149"/>
    </location>
</feature>
<organism>
    <name type="scientific">Leptospira borgpetersenii serovar Hardjo-bovis (strain JB197)</name>
    <dbReference type="NCBI Taxonomy" id="355277"/>
    <lineage>
        <taxon>Bacteria</taxon>
        <taxon>Pseudomonadati</taxon>
        <taxon>Spirochaetota</taxon>
        <taxon>Spirochaetia</taxon>
        <taxon>Leptospirales</taxon>
        <taxon>Leptospiraceae</taxon>
        <taxon>Leptospira</taxon>
    </lineage>
</organism>
<name>RL9_LEPBJ</name>
<evidence type="ECO:0000255" key="1">
    <source>
        <dbReference type="HAMAP-Rule" id="MF_00503"/>
    </source>
</evidence>
<evidence type="ECO:0000305" key="2"/>